<gene>
    <name evidence="1" type="primary">pyrB</name>
    <name type="ordered locus">GWCH70_1044</name>
</gene>
<protein>
    <recommendedName>
        <fullName evidence="1">Aspartate carbamoyltransferase catalytic subunit</fullName>
        <ecNumber evidence="1">2.1.3.2</ecNumber>
    </recommendedName>
    <alternativeName>
        <fullName evidence="1">Aspartate transcarbamylase</fullName>
        <shortName evidence="1">ATCase</shortName>
    </alternativeName>
</protein>
<keyword id="KW-0665">Pyrimidine biosynthesis</keyword>
<keyword id="KW-0808">Transferase</keyword>
<proteinExistence type="inferred from homology"/>
<accession>C5D8P7</accession>
<feature type="chain" id="PRO_1000201593" description="Aspartate carbamoyltransferase catalytic subunit">
    <location>
        <begin position="1"/>
        <end position="309"/>
    </location>
</feature>
<feature type="binding site" evidence="1">
    <location>
        <position position="49"/>
    </location>
    <ligand>
        <name>carbamoyl phosphate</name>
        <dbReference type="ChEBI" id="CHEBI:58228"/>
    </ligand>
</feature>
<feature type="binding site" evidence="1">
    <location>
        <position position="50"/>
    </location>
    <ligand>
        <name>carbamoyl phosphate</name>
        <dbReference type="ChEBI" id="CHEBI:58228"/>
    </ligand>
</feature>
<feature type="binding site" evidence="1">
    <location>
        <position position="77"/>
    </location>
    <ligand>
        <name>L-aspartate</name>
        <dbReference type="ChEBI" id="CHEBI:29991"/>
    </ligand>
</feature>
<feature type="binding site" evidence="1">
    <location>
        <position position="99"/>
    </location>
    <ligand>
        <name>carbamoyl phosphate</name>
        <dbReference type="ChEBI" id="CHEBI:58228"/>
    </ligand>
</feature>
<feature type="binding site" evidence="1">
    <location>
        <position position="127"/>
    </location>
    <ligand>
        <name>carbamoyl phosphate</name>
        <dbReference type="ChEBI" id="CHEBI:58228"/>
    </ligand>
</feature>
<feature type="binding site" evidence="1">
    <location>
        <position position="130"/>
    </location>
    <ligand>
        <name>carbamoyl phosphate</name>
        <dbReference type="ChEBI" id="CHEBI:58228"/>
    </ligand>
</feature>
<feature type="binding site" evidence="1">
    <location>
        <position position="160"/>
    </location>
    <ligand>
        <name>L-aspartate</name>
        <dbReference type="ChEBI" id="CHEBI:29991"/>
    </ligand>
</feature>
<feature type="binding site" evidence="1">
    <location>
        <position position="211"/>
    </location>
    <ligand>
        <name>L-aspartate</name>
        <dbReference type="ChEBI" id="CHEBI:29991"/>
    </ligand>
</feature>
<feature type="binding site" evidence="1">
    <location>
        <position position="252"/>
    </location>
    <ligand>
        <name>carbamoyl phosphate</name>
        <dbReference type="ChEBI" id="CHEBI:58228"/>
    </ligand>
</feature>
<feature type="binding site" evidence="1">
    <location>
        <position position="253"/>
    </location>
    <ligand>
        <name>carbamoyl phosphate</name>
        <dbReference type="ChEBI" id="CHEBI:58228"/>
    </ligand>
</feature>
<sequence>MAHLFTLSELSVTEIIRLLEDAEQFRKGHFWRPPEPMFIANLFFEPSTRTKCSFEMAERKLGLHVIPFDADMSSVQKGETLYDTVRTLEAIGVNALVIRHSQDAYFEELRHTVRTPIINAGDGCGHHPTQSLLDLLTIRQEFGTFAGLTAAIIGDIRHSRVARSNAEVLTRLGAKVLFSSPEEWKDEANPYGTYVDIDTAVAEADVIMLLRIQHERHAEKMGLTKEQYHERYGLTIKRAKKMKANSIILHPAPVNRDVEIESSLVESERSRIFKQMENGVYVRMAVLKRAIEEGRMANGNYFEKWQVVQ</sequence>
<reference key="1">
    <citation type="submission" date="2009-06" db="EMBL/GenBank/DDBJ databases">
        <title>Complete sequence of chromosome of Geopacillus sp. WCH70.</title>
        <authorList>
            <consortium name="US DOE Joint Genome Institute"/>
            <person name="Lucas S."/>
            <person name="Copeland A."/>
            <person name="Lapidus A."/>
            <person name="Glavina del Rio T."/>
            <person name="Dalin E."/>
            <person name="Tice H."/>
            <person name="Bruce D."/>
            <person name="Goodwin L."/>
            <person name="Pitluck S."/>
            <person name="Chertkov O."/>
            <person name="Brettin T."/>
            <person name="Detter J.C."/>
            <person name="Han C."/>
            <person name="Larimer F."/>
            <person name="Land M."/>
            <person name="Hauser L."/>
            <person name="Kyrpides N."/>
            <person name="Mikhailova N."/>
            <person name="Brumm P."/>
            <person name="Mead D.A."/>
            <person name="Richardson P."/>
        </authorList>
    </citation>
    <scope>NUCLEOTIDE SEQUENCE [LARGE SCALE GENOMIC DNA]</scope>
    <source>
        <strain>WCH70</strain>
    </source>
</reference>
<organism>
    <name type="scientific">Geobacillus sp. (strain WCH70)</name>
    <dbReference type="NCBI Taxonomy" id="471223"/>
    <lineage>
        <taxon>Bacteria</taxon>
        <taxon>Bacillati</taxon>
        <taxon>Bacillota</taxon>
        <taxon>Bacilli</taxon>
        <taxon>Bacillales</taxon>
        <taxon>Anoxybacillaceae</taxon>
        <taxon>Geobacillus</taxon>
    </lineage>
</organism>
<comment type="function">
    <text evidence="1">Catalyzes the condensation of carbamoyl phosphate and aspartate to form carbamoyl aspartate and inorganic phosphate, the committed step in the de novo pyrimidine nucleotide biosynthesis pathway.</text>
</comment>
<comment type="catalytic activity">
    <reaction evidence="1">
        <text>carbamoyl phosphate + L-aspartate = N-carbamoyl-L-aspartate + phosphate + H(+)</text>
        <dbReference type="Rhea" id="RHEA:20013"/>
        <dbReference type="ChEBI" id="CHEBI:15378"/>
        <dbReference type="ChEBI" id="CHEBI:29991"/>
        <dbReference type="ChEBI" id="CHEBI:32814"/>
        <dbReference type="ChEBI" id="CHEBI:43474"/>
        <dbReference type="ChEBI" id="CHEBI:58228"/>
        <dbReference type="EC" id="2.1.3.2"/>
    </reaction>
</comment>
<comment type="pathway">
    <text evidence="1">Pyrimidine metabolism; UMP biosynthesis via de novo pathway; (S)-dihydroorotate from bicarbonate: step 2/3.</text>
</comment>
<comment type="subunit">
    <text evidence="1">Heterododecamer (2C3:3R2) of six catalytic PyrB chains organized as two trimers (C3), and six regulatory PyrI chains organized as three dimers (R2).</text>
</comment>
<comment type="similarity">
    <text evidence="1">Belongs to the aspartate/ornithine carbamoyltransferase superfamily. ATCase family.</text>
</comment>
<evidence type="ECO:0000255" key="1">
    <source>
        <dbReference type="HAMAP-Rule" id="MF_00001"/>
    </source>
</evidence>
<name>PYRB_GEOSW</name>
<dbReference type="EC" id="2.1.3.2" evidence="1"/>
<dbReference type="EMBL" id="CP001638">
    <property type="protein sequence ID" value="ACS23904.1"/>
    <property type="molecule type" value="Genomic_DNA"/>
</dbReference>
<dbReference type="SMR" id="C5D8P7"/>
<dbReference type="STRING" id="471223.GWCH70_1044"/>
<dbReference type="KEGG" id="gwc:GWCH70_1044"/>
<dbReference type="eggNOG" id="COG0540">
    <property type="taxonomic scope" value="Bacteria"/>
</dbReference>
<dbReference type="HOGENOM" id="CLU_043846_2_1_9"/>
<dbReference type="OrthoDB" id="9774690at2"/>
<dbReference type="UniPathway" id="UPA00070">
    <property type="reaction ID" value="UER00116"/>
</dbReference>
<dbReference type="GO" id="GO:0005829">
    <property type="term" value="C:cytosol"/>
    <property type="evidence" value="ECO:0007669"/>
    <property type="project" value="TreeGrafter"/>
</dbReference>
<dbReference type="GO" id="GO:0016597">
    <property type="term" value="F:amino acid binding"/>
    <property type="evidence" value="ECO:0007669"/>
    <property type="project" value="InterPro"/>
</dbReference>
<dbReference type="GO" id="GO:0004070">
    <property type="term" value="F:aspartate carbamoyltransferase activity"/>
    <property type="evidence" value="ECO:0007669"/>
    <property type="project" value="UniProtKB-UniRule"/>
</dbReference>
<dbReference type="GO" id="GO:0006207">
    <property type="term" value="P:'de novo' pyrimidine nucleobase biosynthetic process"/>
    <property type="evidence" value="ECO:0007669"/>
    <property type="project" value="InterPro"/>
</dbReference>
<dbReference type="GO" id="GO:0044205">
    <property type="term" value="P:'de novo' UMP biosynthetic process"/>
    <property type="evidence" value="ECO:0007669"/>
    <property type="project" value="UniProtKB-UniRule"/>
</dbReference>
<dbReference type="GO" id="GO:0006520">
    <property type="term" value="P:amino acid metabolic process"/>
    <property type="evidence" value="ECO:0007669"/>
    <property type="project" value="InterPro"/>
</dbReference>
<dbReference type="FunFam" id="3.40.50.1370:FF:000011">
    <property type="entry name" value="Aspartate carbamoyltransferase"/>
    <property type="match status" value="1"/>
</dbReference>
<dbReference type="Gene3D" id="3.40.50.1370">
    <property type="entry name" value="Aspartate/ornithine carbamoyltransferase"/>
    <property type="match status" value="2"/>
</dbReference>
<dbReference type="HAMAP" id="MF_00001">
    <property type="entry name" value="Asp_carb_tr"/>
    <property type="match status" value="1"/>
</dbReference>
<dbReference type="InterPro" id="IPR006132">
    <property type="entry name" value="Asp/Orn_carbamoyltranf_P-bd"/>
</dbReference>
<dbReference type="InterPro" id="IPR006130">
    <property type="entry name" value="Asp/Orn_carbamoylTrfase"/>
</dbReference>
<dbReference type="InterPro" id="IPR036901">
    <property type="entry name" value="Asp/Orn_carbamoylTrfase_sf"/>
</dbReference>
<dbReference type="InterPro" id="IPR002082">
    <property type="entry name" value="Asp_carbamoyltransf"/>
</dbReference>
<dbReference type="InterPro" id="IPR006131">
    <property type="entry name" value="Asp_carbamoyltransf_Asp/Orn-bd"/>
</dbReference>
<dbReference type="NCBIfam" id="TIGR00670">
    <property type="entry name" value="asp_carb_tr"/>
    <property type="match status" value="1"/>
</dbReference>
<dbReference type="NCBIfam" id="NF002032">
    <property type="entry name" value="PRK00856.1"/>
    <property type="match status" value="1"/>
</dbReference>
<dbReference type="PANTHER" id="PTHR45753:SF6">
    <property type="entry name" value="ASPARTATE CARBAMOYLTRANSFERASE"/>
    <property type="match status" value="1"/>
</dbReference>
<dbReference type="PANTHER" id="PTHR45753">
    <property type="entry name" value="ORNITHINE CARBAMOYLTRANSFERASE, MITOCHONDRIAL"/>
    <property type="match status" value="1"/>
</dbReference>
<dbReference type="Pfam" id="PF00185">
    <property type="entry name" value="OTCace"/>
    <property type="match status" value="1"/>
</dbReference>
<dbReference type="Pfam" id="PF02729">
    <property type="entry name" value="OTCace_N"/>
    <property type="match status" value="1"/>
</dbReference>
<dbReference type="PRINTS" id="PR00100">
    <property type="entry name" value="AOTCASE"/>
</dbReference>
<dbReference type="PRINTS" id="PR00101">
    <property type="entry name" value="ATCASE"/>
</dbReference>
<dbReference type="SUPFAM" id="SSF53671">
    <property type="entry name" value="Aspartate/ornithine carbamoyltransferase"/>
    <property type="match status" value="1"/>
</dbReference>
<dbReference type="PROSITE" id="PS00097">
    <property type="entry name" value="CARBAMOYLTRANSFERASE"/>
    <property type="match status" value="1"/>
</dbReference>